<sequence>MTVKICDCEGECCKDSCHCGSTCLPSCSGGEKCKCDHSTGSPQCKSCGEKCKCETTCTCEKSKCNCEKC</sequence>
<protein>
    <recommendedName>
        <fullName>Metallothionein-like protein CRS5</fullName>
    </recommendedName>
</protein>
<comment type="function">
    <text evidence="1">Critical role in copper (specific) homeostasis and detoxification. May protect by directly chelating and sequestering copper ions (By similarity).</text>
</comment>
<comment type="similarity">
    <text evidence="2">Belongs to the metallothionein superfamily. Type 13 family.</text>
</comment>
<dbReference type="EMBL" id="ACFL01000035">
    <property type="protein sequence ID" value="EEU08377.1"/>
    <property type="molecule type" value="Genomic_DNA"/>
</dbReference>
<dbReference type="SMR" id="C7GLG0"/>
<dbReference type="Proteomes" id="UP000008073">
    <property type="component" value="Unassembled WGS sequence"/>
</dbReference>
<dbReference type="GO" id="GO:0046872">
    <property type="term" value="F:metal ion binding"/>
    <property type="evidence" value="ECO:0007669"/>
    <property type="project" value="UniProtKB-KW"/>
</dbReference>
<dbReference type="InterPro" id="IPR035715">
    <property type="entry name" value="Crs5"/>
</dbReference>
<dbReference type="Pfam" id="PF12809">
    <property type="entry name" value="Metallothi_Euk2"/>
    <property type="match status" value="1"/>
</dbReference>
<organism>
    <name type="scientific">Saccharomyces cerevisiae (strain JAY291)</name>
    <name type="common">Baker's yeast</name>
    <dbReference type="NCBI Taxonomy" id="574961"/>
    <lineage>
        <taxon>Eukaryota</taxon>
        <taxon>Fungi</taxon>
        <taxon>Dikarya</taxon>
        <taxon>Ascomycota</taxon>
        <taxon>Saccharomycotina</taxon>
        <taxon>Saccharomycetes</taxon>
        <taxon>Saccharomycetales</taxon>
        <taxon>Saccharomycetaceae</taxon>
        <taxon>Saccharomyces</taxon>
    </lineage>
</organism>
<keyword id="KW-0186">Copper</keyword>
<keyword id="KW-0479">Metal-binding</keyword>
<keyword id="KW-0480">Metal-thiolate cluster</keyword>
<feature type="chain" id="PRO_0000392087" description="Metallothionein-like protein CRS5">
    <location>
        <begin position="1"/>
        <end position="69"/>
    </location>
</feature>
<evidence type="ECO:0000250" key="1"/>
<evidence type="ECO:0000305" key="2"/>
<proteinExistence type="inferred from homology"/>
<gene>
    <name type="primary">CRS5</name>
    <name type="ORF">C1Q_01085</name>
</gene>
<name>CRS5_YEAS2</name>
<reference key="1">
    <citation type="journal article" date="2009" name="Genome Res.">
        <title>Genome structure of a Saccharomyces cerevisiae strain widely used in bioethanol production.</title>
        <authorList>
            <person name="Argueso J.L."/>
            <person name="Carazzolle M.F."/>
            <person name="Mieczkowski P.A."/>
            <person name="Duarte F.M."/>
            <person name="Netto O.V.C."/>
            <person name="Missawa S.K."/>
            <person name="Galzerani F."/>
            <person name="Costa G.G.L."/>
            <person name="Vidal R.O."/>
            <person name="Noronha M.F."/>
            <person name="Dominska M."/>
            <person name="Andrietta M.G.S."/>
            <person name="Andrietta S.R."/>
            <person name="Cunha A.F."/>
            <person name="Gomes L.H."/>
            <person name="Tavares F.C.A."/>
            <person name="Alcarde A.R."/>
            <person name="Dietrich F.S."/>
            <person name="McCusker J.H."/>
            <person name="Petes T.D."/>
            <person name="Pereira G.A.G."/>
        </authorList>
    </citation>
    <scope>NUCLEOTIDE SEQUENCE [LARGE SCALE GENOMIC DNA]</scope>
    <source>
        <strain>JAY291</strain>
    </source>
</reference>
<accession>C7GLG0</accession>